<keyword id="KW-1003">Cell membrane</keyword>
<keyword id="KW-0472">Membrane</keyword>
<feature type="chain" id="PRO_1000205783" description="Putative membrane protein insertion efficiency factor">
    <location>
        <begin position="1"/>
        <end position="89"/>
    </location>
</feature>
<organism>
    <name type="scientific">Exiguobacterium sp. (strain ATCC BAA-1283 / AT1b)</name>
    <dbReference type="NCBI Taxonomy" id="360911"/>
    <lineage>
        <taxon>Bacteria</taxon>
        <taxon>Bacillati</taxon>
        <taxon>Bacillota</taxon>
        <taxon>Bacilli</taxon>
        <taxon>Bacillales</taxon>
        <taxon>Bacillales Family XII. Incertae Sedis</taxon>
        <taxon>Exiguobacterium</taxon>
    </lineage>
</organism>
<gene>
    <name type="ordered locus">EAT1b_2296</name>
</gene>
<comment type="function">
    <text evidence="1">Could be involved in insertion of integral membrane proteins into the membrane.</text>
</comment>
<comment type="subcellular location">
    <subcellularLocation>
        <location evidence="1">Cell membrane</location>
        <topology evidence="1">Peripheral membrane protein</topology>
        <orientation evidence="1">Cytoplasmic side</orientation>
    </subcellularLocation>
</comment>
<comment type="similarity">
    <text evidence="1">Belongs to the UPF0161 family.</text>
</comment>
<reference key="1">
    <citation type="journal article" date="2011" name="J. Bacteriol.">
        <title>Complete genome sequence of the Thermophilic Bacterium Exiguobacterium sp. AT1b.</title>
        <authorList>
            <person name="Vishnivetskaya T.A."/>
            <person name="Lucas S."/>
            <person name="Copeland A."/>
            <person name="Lapidus A."/>
            <person name="Glavina del Rio T."/>
            <person name="Dalin E."/>
            <person name="Tice H."/>
            <person name="Bruce D.C."/>
            <person name="Goodwin L.A."/>
            <person name="Pitluck S."/>
            <person name="Saunders E."/>
            <person name="Brettin T."/>
            <person name="Detter C."/>
            <person name="Han C."/>
            <person name="Larimer F."/>
            <person name="Land M.L."/>
            <person name="Hauser L.J."/>
            <person name="Kyrpides N.C."/>
            <person name="Ovchinnikova G."/>
            <person name="Kathariou S."/>
            <person name="Ramaley R.F."/>
            <person name="Rodrigues D.F."/>
            <person name="Hendrix C."/>
            <person name="Richardson P."/>
            <person name="Tiedje J.M."/>
        </authorList>
    </citation>
    <scope>NUCLEOTIDE SEQUENCE [LARGE SCALE GENOMIC DNA]</scope>
    <source>
        <strain>ATCC BAA-1283 / AT1b</strain>
    </source>
</reference>
<proteinExistence type="inferred from homology"/>
<sequence length="89" mass="10278">MKRVLVKGIQGYQRFISPLKPPTCRFYPSCSHYGIEAIEKHGAVKGSYLTARRLIRCQPFHPGGLDYVPDTFDWKAPLQREKPESQRDD</sequence>
<evidence type="ECO:0000255" key="1">
    <source>
        <dbReference type="HAMAP-Rule" id="MF_00386"/>
    </source>
</evidence>
<accession>C4L2G6</accession>
<name>YIDD_EXISA</name>
<dbReference type="EMBL" id="CP001615">
    <property type="protein sequence ID" value="ACQ71218.1"/>
    <property type="molecule type" value="Genomic_DNA"/>
</dbReference>
<dbReference type="STRING" id="360911.EAT1b_2296"/>
<dbReference type="KEGG" id="eat:EAT1b_2296"/>
<dbReference type="eggNOG" id="COG0759">
    <property type="taxonomic scope" value="Bacteria"/>
</dbReference>
<dbReference type="HOGENOM" id="CLU_144811_2_2_9"/>
<dbReference type="OrthoDB" id="9801753at2"/>
<dbReference type="Proteomes" id="UP000000716">
    <property type="component" value="Chromosome"/>
</dbReference>
<dbReference type="GO" id="GO:0005886">
    <property type="term" value="C:plasma membrane"/>
    <property type="evidence" value="ECO:0007669"/>
    <property type="project" value="UniProtKB-SubCell"/>
</dbReference>
<dbReference type="HAMAP" id="MF_00386">
    <property type="entry name" value="UPF0161_YidD"/>
    <property type="match status" value="1"/>
</dbReference>
<dbReference type="InterPro" id="IPR002696">
    <property type="entry name" value="Membr_insert_effic_factor_YidD"/>
</dbReference>
<dbReference type="NCBIfam" id="TIGR00278">
    <property type="entry name" value="membrane protein insertion efficiency factor YidD"/>
    <property type="match status" value="1"/>
</dbReference>
<dbReference type="PANTHER" id="PTHR33383">
    <property type="entry name" value="MEMBRANE PROTEIN INSERTION EFFICIENCY FACTOR-RELATED"/>
    <property type="match status" value="1"/>
</dbReference>
<dbReference type="PANTHER" id="PTHR33383:SF1">
    <property type="entry name" value="MEMBRANE PROTEIN INSERTION EFFICIENCY FACTOR-RELATED"/>
    <property type="match status" value="1"/>
</dbReference>
<dbReference type="Pfam" id="PF01809">
    <property type="entry name" value="YidD"/>
    <property type="match status" value="1"/>
</dbReference>
<dbReference type="SMART" id="SM01234">
    <property type="entry name" value="Haemolytic"/>
    <property type="match status" value="1"/>
</dbReference>
<protein>
    <recommendedName>
        <fullName evidence="1">Putative membrane protein insertion efficiency factor</fullName>
    </recommendedName>
</protein>